<accession>A0A023PXJ3</accession>
<comment type="subcellular location">
    <subcellularLocation>
        <location evidence="1">Membrane</location>
        <topology evidence="1">Single-pass membrane protein</topology>
    </subcellularLocation>
</comment>
<comment type="miscellaneous">
    <text evidence="2">Partially overlaps YER076C.</text>
</comment>
<comment type="caution">
    <text evidence="3">Product of a dubious gene prediction unlikely to encode a functional protein. Because of that it is not part of the S.cerevisiae S288c complete/reference proteome set.</text>
</comment>
<feature type="chain" id="PRO_0000431008" description="Putative uncharacterized membrane protein YER076W-A">
    <location>
        <begin position="1"/>
        <end position="115"/>
    </location>
</feature>
<feature type="transmembrane region" description="Helical" evidence="1">
    <location>
        <begin position="36"/>
        <end position="56"/>
    </location>
</feature>
<proteinExistence type="uncertain"/>
<dbReference type="EMBL" id="KJ412232">
    <property type="protein sequence ID" value="AHX39275.1"/>
    <property type="molecule type" value="Genomic_DNA"/>
</dbReference>
<dbReference type="SMR" id="A0A023PXJ3"/>
<dbReference type="PaxDb" id="4932-YER076W-A"/>
<dbReference type="EnsemblFungi" id="YER076W-A_mRNA">
    <property type="protein sequence ID" value="YER076W-A"/>
    <property type="gene ID" value="YER076W-A"/>
</dbReference>
<dbReference type="AGR" id="SGD:S000028750"/>
<dbReference type="SGD" id="S000028750">
    <property type="gene designation" value="YER076W-A"/>
</dbReference>
<dbReference type="HOGENOM" id="CLU_2110368_0_0_1"/>
<dbReference type="GO" id="GO:0016020">
    <property type="term" value="C:membrane"/>
    <property type="evidence" value="ECO:0007669"/>
    <property type="project" value="UniProtKB-SubCell"/>
</dbReference>
<reference key="1">
    <citation type="journal article" date="1997" name="Nature">
        <title>The nucleotide sequence of Saccharomyces cerevisiae chromosome V.</title>
        <authorList>
            <person name="Dietrich F.S."/>
            <person name="Mulligan J.T."/>
            <person name="Hennessy K.M."/>
            <person name="Yelton M.A."/>
            <person name="Allen E."/>
            <person name="Araujo R."/>
            <person name="Aviles E."/>
            <person name="Berno A."/>
            <person name="Brennan T."/>
            <person name="Carpenter J."/>
            <person name="Chen E."/>
            <person name="Cherry J.M."/>
            <person name="Chung E."/>
            <person name="Duncan M."/>
            <person name="Guzman E."/>
            <person name="Hartzell G."/>
            <person name="Hunicke-Smith S."/>
            <person name="Hyman R.W."/>
            <person name="Kayser A."/>
            <person name="Komp C."/>
            <person name="Lashkari D."/>
            <person name="Lew H."/>
            <person name="Lin D."/>
            <person name="Mosedale D."/>
            <person name="Nakahara K."/>
            <person name="Namath A."/>
            <person name="Norgren R."/>
            <person name="Oefner P."/>
            <person name="Oh C."/>
            <person name="Petel F.X."/>
            <person name="Roberts D."/>
            <person name="Sehl P."/>
            <person name="Schramm S."/>
            <person name="Shogren T."/>
            <person name="Smith V."/>
            <person name="Taylor P."/>
            <person name="Wei Y."/>
            <person name="Botstein D."/>
            <person name="Davis R.W."/>
        </authorList>
    </citation>
    <scope>NUCLEOTIDE SEQUENCE [LARGE SCALE GENOMIC DNA]</scope>
    <source>
        <strain>ATCC 204508 / S288c</strain>
    </source>
</reference>
<reference key="2">
    <citation type="journal article" date="2014" name="G3 (Bethesda)">
        <title>The reference genome sequence of Saccharomyces cerevisiae: Then and now.</title>
        <authorList>
            <person name="Engel S.R."/>
            <person name="Dietrich F.S."/>
            <person name="Fisk D.G."/>
            <person name="Binkley G."/>
            <person name="Balakrishnan R."/>
            <person name="Costanzo M.C."/>
            <person name="Dwight S.S."/>
            <person name="Hitz B.C."/>
            <person name="Karra K."/>
            <person name="Nash R.S."/>
            <person name="Weng S."/>
            <person name="Wong E.D."/>
            <person name="Lloyd P."/>
            <person name="Skrzypek M.S."/>
            <person name="Miyasato S.R."/>
            <person name="Simison M."/>
            <person name="Cherry J.M."/>
        </authorList>
    </citation>
    <scope>GENOME REANNOTATION</scope>
    <source>
        <strain>ATCC 204508 / S288c</strain>
    </source>
</reference>
<gene>
    <name evidence="4" type="ordered locus">YER076W-A</name>
</gene>
<name>YE76A_YEAST</name>
<keyword id="KW-0472">Membrane</keyword>
<keyword id="KW-0812">Transmembrane</keyword>
<keyword id="KW-1133">Transmembrane helix</keyword>
<sequence length="115" mass="13260">MASPGFHRPSGRSQHVCMRITIRSHKKMRRYSILRSFFSLGLIACFCIFLIIVLSEEPNMRLLYKLSYGYVKILNNVKLLESIASCIRCGRITSVNDLNQFVFQSTAVFFTNKTD</sequence>
<protein>
    <recommendedName>
        <fullName evidence="2">Putative uncharacterized membrane protein YER076W-A</fullName>
    </recommendedName>
</protein>
<organism>
    <name type="scientific">Saccharomyces cerevisiae (strain ATCC 204508 / S288c)</name>
    <name type="common">Baker's yeast</name>
    <dbReference type="NCBI Taxonomy" id="559292"/>
    <lineage>
        <taxon>Eukaryota</taxon>
        <taxon>Fungi</taxon>
        <taxon>Dikarya</taxon>
        <taxon>Ascomycota</taxon>
        <taxon>Saccharomycotina</taxon>
        <taxon>Saccharomycetes</taxon>
        <taxon>Saccharomycetales</taxon>
        <taxon>Saccharomycetaceae</taxon>
        <taxon>Saccharomyces</taxon>
    </lineage>
</organism>
<evidence type="ECO:0000255" key="1"/>
<evidence type="ECO:0000305" key="2"/>
<evidence type="ECO:0000305" key="3">
    <source>
    </source>
</evidence>
<evidence type="ECO:0000312" key="4">
    <source>
        <dbReference type="SGD" id="S000028750"/>
    </source>
</evidence>